<evidence type="ECO:0000255" key="1">
    <source>
        <dbReference type="HAMAP-Rule" id="MF_01007"/>
    </source>
</evidence>
<evidence type="ECO:0000305" key="2"/>
<keyword id="KW-0963">Cytoplasm</keyword>
<keyword id="KW-0489">Methyltransferase</keyword>
<keyword id="KW-0698">rRNA processing</keyword>
<keyword id="KW-0949">S-adenosyl-L-methionine</keyword>
<keyword id="KW-0808">Transferase</keyword>
<dbReference type="EC" id="2.1.1.199" evidence="1"/>
<dbReference type="EMBL" id="CP000124">
    <property type="protein sequence ID" value="ABA49337.1"/>
    <property type="status" value="ALT_INIT"/>
    <property type="molecule type" value="Genomic_DNA"/>
</dbReference>
<dbReference type="RefSeq" id="WP_004194427.1">
    <property type="nucleotide sequence ID" value="NC_007434.1"/>
</dbReference>
<dbReference type="SMR" id="Q3JND0"/>
<dbReference type="EnsemblBacteria" id="ABA49337">
    <property type="protein sequence ID" value="ABA49337"/>
    <property type="gene ID" value="BURPS1710b_3553"/>
</dbReference>
<dbReference type="GeneID" id="93061635"/>
<dbReference type="KEGG" id="bpm:BURPS1710b_3553"/>
<dbReference type="HOGENOM" id="CLU_038422_2_0_4"/>
<dbReference type="Proteomes" id="UP000002700">
    <property type="component" value="Chromosome I"/>
</dbReference>
<dbReference type="GO" id="GO:0005737">
    <property type="term" value="C:cytoplasm"/>
    <property type="evidence" value="ECO:0007669"/>
    <property type="project" value="UniProtKB-SubCell"/>
</dbReference>
<dbReference type="GO" id="GO:0071424">
    <property type="term" value="F:rRNA (cytosine-N4-)-methyltransferase activity"/>
    <property type="evidence" value="ECO:0007669"/>
    <property type="project" value="UniProtKB-UniRule"/>
</dbReference>
<dbReference type="GO" id="GO:0070475">
    <property type="term" value="P:rRNA base methylation"/>
    <property type="evidence" value="ECO:0007669"/>
    <property type="project" value="UniProtKB-UniRule"/>
</dbReference>
<dbReference type="Gene3D" id="1.10.150.170">
    <property type="entry name" value="Putative methyltransferase TM0872, insert domain"/>
    <property type="match status" value="1"/>
</dbReference>
<dbReference type="Gene3D" id="3.40.50.150">
    <property type="entry name" value="Vaccinia Virus protein VP39"/>
    <property type="match status" value="1"/>
</dbReference>
<dbReference type="HAMAP" id="MF_01007">
    <property type="entry name" value="16SrRNA_methyltr_H"/>
    <property type="match status" value="1"/>
</dbReference>
<dbReference type="InterPro" id="IPR002903">
    <property type="entry name" value="RsmH"/>
</dbReference>
<dbReference type="InterPro" id="IPR023397">
    <property type="entry name" value="SAM-dep_MeTrfase_MraW_recog"/>
</dbReference>
<dbReference type="InterPro" id="IPR029063">
    <property type="entry name" value="SAM-dependent_MTases_sf"/>
</dbReference>
<dbReference type="NCBIfam" id="TIGR00006">
    <property type="entry name" value="16S rRNA (cytosine(1402)-N(4))-methyltransferase RsmH"/>
    <property type="match status" value="1"/>
</dbReference>
<dbReference type="PANTHER" id="PTHR11265:SF0">
    <property type="entry name" value="12S RRNA N4-METHYLCYTIDINE METHYLTRANSFERASE"/>
    <property type="match status" value="1"/>
</dbReference>
<dbReference type="PANTHER" id="PTHR11265">
    <property type="entry name" value="S-ADENOSYL-METHYLTRANSFERASE MRAW"/>
    <property type="match status" value="1"/>
</dbReference>
<dbReference type="Pfam" id="PF01795">
    <property type="entry name" value="Methyltransf_5"/>
    <property type="match status" value="1"/>
</dbReference>
<dbReference type="PIRSF" id="PIRSF004486">
    <property type="entry name" value="MraW"/>
    <property type="match status" value="1"/>
</dbReference>
<dbReference type="SUPFAM" id="SSF81799">
    <property type="entry name" value="Putative methyltransferase TM0872, insert domain"/>
    <property type="match status" value="1"/>
</dbReference>
<dbReference type="SUPFAM" id="SSF53335">
    <property type="entry name" value="S-adenosyl-L-methionine-dependent methyltransferases"/>
    <property type="match status" value="1"/>
</dbReference>
<accession>Q3JND0</accession>
<comment type="function">
    <text evidence="1">Specifically methylates the N4 position of cytidine in position 1402 (C1402) of 16S rRNA.</text>
</comment>
<comment type="catalytic activity">
    <reaction evidence="1">
        <text>cytidine(1402) in 16S rRNA + S-adenosyl-L-methionine = N(4)-methylcytidine(1402) in 16S rRNA + S-adenosyl-L-homocysteine + H(+)</text>
        <dbReference type="Rhea" id="RHEA:42928"/>
        <dbReference type="Rhea" id="RHEA-COMP:10286"/>
        <dbReference type="Rhea" id="RHEA-COMP:10287"/>
        <dbReference type="ChEBI" id="CHEBI:15378"/>
        <dbReference type="ChEBI" id="CHEBI:57856"/>
        <dbReference type="ChEBI" id="CHEBI:59789"/>
        <dbReference type="ChEBI" id="CHEBI:74506"/>
        <dbReference type="ChEBI" id="CHEBI:82748"/>
        <dbReference type="EC" id="2.1.1.199"/>
    </reaction>
</comment>
<comment type="subcellular location">
    <subcellularLocation>
        <location evidence="1">Cytoplasm</location>
    </subcellularLocation>
</comment>
<comment type="similarity">
    <text evidence="1">Belongs to the methyltransferase superfamily. RsmH family.</text>
</comment>
<comment type="sequence caution" evidence="2">
    <conflict type="erroneous initiation">
        <sequence resource="EMBL-CDS" id="ABA49337"/>
    </conflict>
</comment>
<name>RSMH_BURP1</name>
<reference key="1">
    <citation type="journal article" date="2010" name="Genome Biol. Evol.">
        <title>Continuing evolution of Burkholderia mallei through genome reduction and large-scale rearrangements.</title>
        <authorList>
            <person name="Losada L."/>
            <person name="Ronning C.M."/>
            <person name="DeShazer D."/>
            <person name="Woods D."/>
            <person name="Fedorova N."/>
            <person name="Kim H.S."/>
            <person name="Shabalina S.A."/>
            <person name="Pearson T.R."/>
            <person name="Brinkac L."/>
            <person name="Tan P."/>
            <person name="Nandi T."/>
            <person name="Crabtree J."/>
            <person name="Badger J."/>
            <person name="Beckstrom-Sternberg S."/>
            <person name="Saqib M."/>
            <person name="Schutzer S.E."/>
            <person name="Keim P."/>
            <person name="Nierman W.C."/>
        </authorList>
    </citation>
    <scope>NUCLEOTIDE SEQUENCE [LARGE SCALE GENOMIC DNA]</scope>
    <source>
        <strain>1710b</strain>
    </source>
</reference>
<feature type="chain" id="PRO_0000223532" description="Ribosomal RNA small subunit methyltransferase H">
    <location>
        <begin position="1"/>
        <end position="313"/>
    </location>
</feature>
<feature type="binding site" evidence="1">
    <location>
        <begin position="35"/>
        <end position="37"/>
    </location>
    <ligand>
        <name>S-adenosyl-L-methionine</name>
        <dbReference type="ChEBI" id="CHEBI:59789"/>
    </ligand>
</feature>
<feature type="binding site" evidence="1">
    <location>
        <position position="55"/>
    </location>
    <ligand>
        <name>S-adenosyl-L-methionine</name>
        <dbReference type="ChEBI" id="CHEBI:59789"/>
    </ligand>
</feature>
<feature type="binding site" evidence="1">
    <location>
        <position position="79"/>
    </location>
    <ligand>
        <name>S-adenosyl-L-methionine</name>
        <dbReference type="ChEBI" id="CHEBI:59789"/>
    </ligand>
</feature>
<feature type="binding site" evidence="1">
    <location>
        <position position="100"/>
    </location>
    <ligand>
        <name>S-adenosyl-L-methionine</name>
        <dbReference type="ChEBI" id="CHEBI:59789"/>
    </ligand>
</feature>
<feature type="binding site" evidence="1">
    <location>
        <position position="107"/>
    </location>
    <ligand>
        <name>S-adenosyl-L-methionine</name>
        <dbReference type="ChEBI" id="CHEBI:59789"/>
    </ligand>
</feature>
<protein>
    <recommendedName>
        <fullName evidence="1">Ribosomal RNA small subunit methyltransferase H</fullName>
        <ecNumber evidence="1">2.1.1.199</ecNumber>
    </recommendedName>
    <alternativeName>
        <fullName evidence="1">16S rRNA m(4)C1402 methyltransferase</fullName>
    </alternativeName>
    <alternativeName>
        <fullName evidence="1">rRNA (cytosine-N(4)-)-methyltransferase RsmH</fullName>
    </alternativeName>
</protein>
<gene>
    <name evidence="1" type="primary">rsmH</name>
    <name type="synonym">mraW</name>
    <name type="ordered locus">BURPS1710b_3553</name>
</gene>
<sequence>MGNEFQHRTVLLDEAVDALVTRPDGVYVDGTFGRGGHSRAVLARLGDAGRLIAFDKDPRAIETAESIEDARFEIVHDSFAAMKGALDARGVGRVSGVLLDLGVSSPQVDDPARGFSFRANGPLDMRMDPTRGESAAEWLARASVQELTEVIRDYGEERFAFQIAKAIVARRAESDRLGPLDSTGELAQIVGHVVKTREKGKDPATRTFQAIRIHVNQELADLQVVLEAALSLLEQGGRLVVISFHSLEDRIVKRFLQAHASAPAVDRRLPIRAADLPRPPLKLLGRMFPNDAEVAANPRARSAVMRIAERVAP</sequence>
<proteinExistence type="inferred from homology"/>
<organism>
    <name type="scientific">Burkholderia pseudomallei (strain 1710b)</name>
    <dbReference type="NCBI Taxonomy" id="320372"/>
    <lineage>
        <taxon>Bacteria</taxon>
        <taxon>Pseudomonadati</taxon>
        <taxon>Pseudomonadota</taxon>
        <taxon>Betaproteobacteria</taxon>
        <taxon>Burkholderiales</taxon>
        <taxon>Burkholderiaceae</taxon>
        <taxon>Burkholderia</taxon>
        <taxon>pseudomallei group</taxon>
    </lineage>
</organism>